<protein>
    <recommendedName>
        <fullName>Cytochrome b561 and DOMON domain-containing protein At4g12980</fullName>
    </recommendedName>
    <alternativeName>
        <fullName>Protein b561A.tha15</fullName>
    </alternativeName>
</protein>
<organism>
    <name type="scientific">Arabidopsis thaliana</name>
    <name type="common">Mouse-ear cress</name>
    <dbReference type="NCBI Taxonomy" id="3702"/>
    <lineage>
        <taxon>Eukaryota</taxon>
        <taxon>Viridiplantae</taxon>
        <taxon>Streptophyta</taxon>
        <taxon>Embryophyta</taxon>
        <taxon>Tracheophyta</taxon>
        <taxon>Spermatophyta</taxon>
        <taxon>Magnoliopsida</taxon>
        <taxon>eudicotyledons</taxon>
        <taxon>Gunneridae</taxon>
        <taxon>Pentapetalae</taxon>
        <taxon>rosids</taxon>
        <taxon>malvids</taxon>
        <taxon>Brassicales</taxon>
        <taxon>Brassicaceae</taxon>
        <taxon>Camelineae</taxon>
        <taxon>Arabidopsis</taxon>
    </lineage>
</organism>
<comment type="function">
    <text evidence="5">May act as a catecholamine-responsive trans-membrane electron transporter.</text>
</comment>
<comment type="cofactor">
    <cofactor evidence="1">
        <name>heme b</name>
        <dbReference type="ChEBI" id="CHEBI:60344"/>
    </cofactor>
    <text evidence="1">Binds 2 heme b groups non-covalently.</text>
</comment>
<comment type="subcellular location">
    <subcellularLocation>
        <location evidence="7">Membrane</location>
        <topology evidence="7">Multi-pass membrane protein</topology>
    </subcellularLocation>
</comment>
<comment type="domain">
    <text evidence="5 6">DOMON domain could bind catecholamines and thereby could regulate the cytochrome b561 domain function (PubMed:15022831). DOMON domain could bind one heme b (PubMed:19386804).</text>
</comment>
<gene>
    <name type="ordered locus">At4g12980</name>
    <name type="ORF">F25G13.70</name>
</gene>
<evidence type="ECO:0000250" key="1">
    <source>
        <dbReference type="UniProtKB" id="Q9SWS1"/>
    </source>
</evidence>
<evidence type="ECO:0000255" key="2"/>
<evidence type="ECO:0000255" key="3">
    <source>
        <dbReference type="PROSITE-ProRule" id="PRU00242"/>
    </source>
</evidence>
<evidence type="ECO:0000255" key="4">
    <source>
        <dbReference type="PROSITE-ProRule" id="PRU00246"/>
    </source>
</evidence>
<evidence type="ECO:0000269" key="5">
    <source>
    </source>
</evidence>
<evidence type="ECO:0000269" key="6">
    <source>
    </source>
</evidence>
<evidence type="ECO:0000305" key="7"/>
<feature type="signal peptide" evidence="2">
    <location>
        <begin position="1"/>
        <end position="24"/>
    </location>
</feature>
<feature type="chain" id="PRO_0000430482" description="Cytochrome b561 and DOMON domain-containing protein At4g12980">
    <location>
        <begin position="25"/>
        <end position="394"/>
    </location>
</feature>
<feature type="transmembrane region" description="Helical; Name=1" evidence="2">
    <location>
        <begin position="220"/>
        <end position="240"/>
    </location>
</feature>
<feature type="transmembrane region" description="Helical; Name=2" evidence="2">
    <location>
        <begin position="252"/>
        <end position="272"/>
    </location>
</feature>
<feature type="transmembrane region" description="Helical; Name=3" evidence="2">
    <location>
        <begin position="292"/>
        <end position="312"/>
    </location>
</feature>
<feature type="transmembrane region" description="Helical; Name=4" evidence="2">
    <location>
        <begin position="328"/>
        <end position="348"/>
    </location>
</feature>
<feature type="transmembrane region" description="Helical; Name=5" evidence="2">
    <location>
        <begin position="361"/>
        <end position="381"/>
    </location>
</feature>
<feature type="domain" description="DOMON" evidence="4">
    <location>
        <begin position="49"/>
        <end position="169"/>
    </location>
</feature>
<feature type="domain" description="Cytochrome b561" evidence="3">
    <location>
        <begin position="184"/>
        <end position="381"/>
    </location>
</feature>
<feature type="binding site" description="axial binding residue" evidence="1">
    <location>
        <position position="221"/>
    </location>
    <ligand>
        <name>heme b</name>
        <dbReference type="ChEBI" id="CHEBI:60344"/>
        <label>1</label>
    </ligand>
    <ligandPart>
        <name>Fe</name>
        <dbReference type="ChEBI" id="CHEBI:18248"/>
    </ligandPart>
</feature>
<feature type="binding site" description="axial binding residue" evidence="1">
    <location>
        <position position="257"/>
    </location>
    <ligand>
        <name>heme b</name>
        <dbReference type="ChEBI" id="CHEBI:60344"/>
        <label>2</label>
    </ligand>
    <ligandPart>
        <name>Fe</name>
        <dbReference type="ChEBI" id="CHEBI:18248"/>
    </ligandPart>
</feature>
<feature type="binding site" description="axial binding residue" evidence="1">
    <location>
        <position position="290"/>
    </location>
    <ligand>
        <name>heme b</name>
        <dbReference type="ChEBI" id="CHEBI:60344"/>
        <label>1</label>
    </ligand>
    <ligandPart>
        <name>Fe</name>
        <dbReference type="ChEBI" id="CHEBI:18248"/>
    </ligandPart>
</feature>
<feature type="binding site" description="axial binding residue" evidence="1">
    <location>
        <position position="326"/>
    </location>
    <ligand>
        <name>heme b</name>
        <dbReference type="ChEBI" id="CHEBI:60344"/>
        <label>2</label>
    </ligand>
    <ligandPart>
        <name>Fe</name>
        <dbReference type="ChEBI" id="CHEBI:18248"/>
    </ligandPart>
</feature>
<feature type="sequence conflict" description="In Ref. 4; AAM65781." evidence="7" ref="4">
    <original>V</original>
    <variation>A</variation>
    <location>
        <position position="266"/>
    </location>
</feature>
<feature type="sequence conflict" description="In Ref. 4; AAM65781." evidence="7" ref="4">
    <original>C</original>
    <variation>S</variation>
    <location>
        <position position="296"/>
    </location>
</feature>
<dbReference type="EMBL" id="AL079349">
    <property type="protein sequence ID" value="CAB45497.1"/>
    <property type="molecule type" value="Genomic_DNA"/>
</dbReference>
<dbReference type="EMBL" id="AL161535">
    <property type="protein sequence ID" value="CAB78340.1"/>
    <property type="molecule type" value="Genomic_DNA"/>
</dbReference>
<dbReference type="EMBL" id="CP002687">
    <property type="protein sequence ID" value="AEE83210.1"/>
    <property type="molecule type" value="Genomic_DNA"/>
</dbReference>
<dbReference type="EMBL" id="BT003827">
    <property type="protein sequence ID" value="AAO41879.1"/>
    <property type="molecule type" value="mRNA"/>
</dbReference>
<dbReference type="EMBL" id="BT005128">
    <property type="protein sequence ID" value="AAO50661.1"/>
    <property type="molecule type" value="mRNA"/>
</dbReference>
<dbReference type="EMBL" id="AY088240">
    <property type="protein sequence ID" value="AAM65781.1"/>
    <property type="molecule type" value="mRNA"/>
</dbReference>
<dbReference type="PIR" id="T10200">
    <property type="entry name" value="T10200"/>
</dbReference>
<dbReference type="RefSeq" id="NP_193034.1">
    <property type="nucleotide sequence ID" value="NM_117367.3"/>
</dbReference>
<dbReference type="BioGRID" id="12207">
    <property type="interactions" value="2"/>
</dbReference>
<dbReference type="FunCoup" id="Q9SV71">
    <property type="interactions" value="5"/>
</dbReference>
<dbReference type="IntAct" id="Q9SV71">
    <property type="interactions" value="2"/>
</dbReference>
<dbReference type="STRING" id="3702.Q9SV71"/>
<dbReference type="TCDB" id="5.B.2.2.7">
    <property type="family name" value="the eukaryotic cytochrome b561 (cytb561) family"/>
</dbReference>
<dbReference type="PaxDb" id="3702-AT4G12980.1"/>
<dbReference type="ProteomicsDB" id="241196"/>
<dbReference type="EnsemblPlants" id="AT4G12980.1">
    <property type="protein sequence ID" value="AT4G12980.1"/>
    <property type="gene ID" value="AT4G12980"/>
</dbReference>
<dbReference type="GeneID" id="826910"/>
<dbReference type="Gramene" id="AT4G12980.1">
    <property type="protein sequence ID" value="AT4G12980.1"/>
    <property type="gene ID" value="AT4G12980"/>
</dbReference>
<dbReference type="KEGG" id="ath:AT4G12980"/>
<dbReference type="Araport" id="AT4G12980"/>
<dbReference type="TAIR" id="AT4G12980">
    <property type="gene designation" value="DEG18"/>
</dbReference>
<dbReference type="eggNOG" id="KOG4293">
    <property type="taxonomic scope" value="Eukaryota"/>
</dbReference>
<dbReference type="HOGENOM" id="CLU_036675_1_1_1"/>
<dbReference type="InParanoid" id="Q9SV71"/>
<dbReference type="OMA" id="CQCSAYV"/>
<dbReference type="PhylomeDB" id="Q9SV71"/>
<dbReference type="PRO" id="PR:Q9SV71"/>
<dbReference type="Proteomes" id="UP000006548">
    <property type="component" value="Chromosome 4"/>
</dbReference>
<dbReference type="ExpressionAtlas" id="Q9SV71">
    <property type="expression patterns" value="baseline and differential"/>
</dbReference>
<dbReference type="GO" id="GO:0005829">
    <property type="term" value="C:cytosol"/>
    <property type="evidence" value="ECO:0007005"/>
    <property type="project" value="TAIR"/>
</dbReference>
<dbReference type="GO" id="GO:0016020">
    <property type="term" value="C:membrane"/>
    <property type="evidence" value="ECO:0007669"/>
    <property type="project" value="UniProtKB-SubCell"/>
</dbReference>
<dbReference type="GO" id="GO:0046872">
    <property type="term" value="F:metal ion binding"/>
    <property type="evidence" value="ECO:0007669"/>
    <property type="project" value="UniProtKB-KW"/>
</dbReference>
<dbReference type="CDD" id="cd08760">
    <property type="entry name" value="Cyt_b561_FRRS1_like"/>
    <property type="match status" value="1"/>
</dbReference>
<dbReference type="CDD" id="cd09629">
    <property type="entry name" value="DOMON_CIL1_like"/>
    <property type="match status" value="1"/>
</dbReference>
<dbReference type="FunFam" id="1.20.120.1770:FF:000007">
    <property type="entry name" value="Cytochrome b561 and DOMON domain-containing protein"/>
    <property type="match status" value="1"/>
</dbReference>
<dbReference type="Gene3D" id="1.20.120.1770">
    <property type="match status" value="1"/>
</dbReference>
<dbReference type="InterPro" id="IPR045265">
    <property type="entry name" value="AIR12_DOMON"/>
</dbReference>
<dbReference type="InterPro" id="IPR006593">
    <property type="entry name" value="Cyt_b561/ferric_Rdtase_TM"/>
</dbReference>
<dbReference type="InterPro" id="IPR005018">
    <property type="entry name" value="DOMON_domain"/>
</dbReference>
<dbReference type="InterPro" id="IPR017214">
    <property type="entry name" value="UCP037471"/>
</dbReference>
<dbReference type="PANTHER" id="PTHR23130">
    <property type="entry name" value="CYTOCHROME B561 AND DOMON DOMAIN-CONTAINING PROTEIN"/>
    <property type="match status" value="1"/>
</dbReference>
<dbReference type="PANTHER" id="PTHR23130:SF178">
    <property type="entry name" value="CYTOCHROME B561 AND DOMON DOMAIN-CONTAINING PROTEIN"/>
    <property type="match status" value="1"/>
</dbReference>
<dbReference type="Pfam" id="PF03188">
    <property type="entry name" value="Cytochrom_B561"/>
    <property type="match status" value="1"/>
</dbReference>
<dbReference type="Pfam" id="PF04526">
    <property type="entry name" value="DUF568"/>
    <property type="match status" value="1"/>
</dbReference>
<dbReference type="PIRSF" id="PIRSF037471">
    <property type="entry name" value="UCP037471"/>
    <property type="match status" value="1"/>
</dbReference>
<dbReference type="SMART" id="SM00665">
    <property type="entry name" value="B561"/>
    <property type="match status" value="1"/>
</dbReference>
<dbReference type="PROSITE" id="PS50939">
    <property type="entry name" value="CYTOCHROME_B561"/>
    <property type="match status" value="1"/>
</dbReference>
<dbReference type="PROSITE" id="PS50836">
    <property type="entry name" value="DOMON"/>
    <property type="match status" value="1"/>
</dbReference>
<sequence length="394" mass="42229">MDSSYLRISLSFLFWALLLSPAVSQSSSCSSQTFSGVKSYPHCLDLPDLKAILHYSYDASNTTLAVVFSAPPSKPGGWIAWAINPKSTGMAGSQALVASKDPSTGVASVTTLNIVSYSSLVPSKLSFDVWDVKAEEAANDGGALRIFAKVKVPADLAASGKVNQVWQVGPGVSNGRIQAHDFSGPNLNSVGSLDLTGTTPGVPVSGGGGAGNSRIHKRNIHGILNAVSWGLLFPIGAMIARYMRIFESADPAWFYLHVSCQFSAYVIGVAGWATGLKLGSESKGIQYNTHRNIGICLFSIATLQMFAMLLRPRKDHKFRFVWNIYHHGVGYSILILGIINVFKGLSILNPKHTYKTAYIAVIGTLGGITLLLEVVTWVIVLKRKSAKSTKPLKA</sequence>
<accession>Q9SV71</accession>
<accession>Q8L9T0</accession>
<keyword id="KW-0249">Electron transport</keyword>
<keyword id="KW-0349">Heme</keyword>
<keyword id="KW-0408">Iron</keyword>
<keyword id="KW-0472">Membrane</keyword>
<keyword id="KW-0479">Metal-binding</keyword>
<keyword id="KW-1185">Reference proteome</keyword>
<keyword id="KW-0732">Signal</keyword>
<keyword id="KW-0812">Transmembrane</keyword>
<keyword id="KW-1133">Transmembrane helix</keyword>
<keyword id="KW-0813">Transport</keyword>
<reference key="1">
    <citation type="journal article" date="1999" name="Nature">
        <title>Sequence and analysis of chromosome 4 of the plant Arabidopsis thaliana.</title>
        <authorList>
            <person name="Mayer K.F.X."/>
            <person name="Schueller C."/>
            <person name="Wambutt R."/>
            <person name="Murphy G."/>
            <person name="Volckaert G."/>
            <person name="Pohl T."/>
            <person name="Duesterhoeft A."/>
            <person name="Stiekema W."/>
            <person name="Entian K.-D."/>
            <person name="Terryn N."/>
            <person name="Harris B."/>
            <person name="Ansorge W."/>
            <person name="Brandt P."/>
            <person name="Grivell L.A."/>
            <person name="Rieger M."/>
            <person name="Weichselgartner M."/>
            <person name="de Simone V."/>
            <person name="Obermaier B."/>
            <person name="Mache R."/>
            <person name="Mueller M."/>
            <person name="Kreis M."/>
            <person name="Delseny M."/>
            <person name="Puigdomenech P."/>
            <person name="Watson M."/>
            <person name="Schmidtheini T."/>
            <person name="Reichert B."/>
            <person name="Portetelle D."/>
            <person name="Perez-Alonso M."/>
            <person name="Boutry M."/>
            <person name="Bancroft I."/>
            <person name="Vos P."/>
            <person name="Hoheisel J."/>
            <person name="Zimmermann W."/>
            <person name="Wedler H."/>
            <person name="Ridley P."/>
            <person name="Langham S.-A."/>
            <person name="McCullagh B."/>
            <person name="Bilham L."/>
            <person name="Robben J."/>
            <person name="van der Schueren J."/>
            <person name="Grymonprez B."/>
            <person name="Chuang Y.-J."/>
            <person name="Vandenbussche F."/>
            <person name="Braeken M."/>
            <person name="Weltjens I."/>
            <person name="Voet M."/>
            <person name="Bastiaens I."/>
            <person name="Aert R."/>
            <person name="Defoor E."/>
            <person name="Weitzenegger T."/>
            <person name="Bothe G."/>
            <person name="Ramsperger U."/>
            <person name="Hilbert H."/>
            <person name="Braun M."/>
            <person name="Holzer E."/>
            <person name="Brandt A."/>
            <person name="Peters S."/>
            <person name="van Staveren M."/>
            <person name="Dirkse W."/>
            <person name="Mooijman P."/>
            <person name="Klein Lankhorst R."/>
            <person name="Rose M."/>
            <person name="Hauf J."/>
            <person name="Koetter P."/>
            <person name="Berneiser S."/>
            <person name="Hempel S."/>
            <person name="Feldpausch M."/>
            <person name="Lamberth S."/>
            <person name="Van den Daele H."/>
            <person name="De Keyser A."/>
            <person name="Buysshaert C."/>
            <person name="Gielen J."/>
            <person name="Villarroel R."/>
            <person name="De Clercq R."/>
            <person name="van Montagu M."/>
            <person name="Rogers J."/>
            <person name="Cronin A."/>
            <person name="Quail M.A."/>
            <person name="Bray-Allen S."/>
            <person name="Clark L."/>
            <person name="Doggett J."/>
            <person name="Hall S."/>
            <person name="Kay M."/>
            <person name="Lennard N."/>
            <person name="McLay K."/>
            <person name="Mayes R."/>
            <person name="Pettett A."/>
            <person name="Rajandream M.A."/>
            <person name="Lyne M."/>
            <person name="Benes V."/>
            <person name="Rechmann S."/>
            <person name="Borkova D."/>
            <person name="Bloecker H."/>
            <person name="Scharfe M."/>
            <person name="Grimm M."/>
            <person name="Loehnert T.-H."/>
            <person name="Dose S."/>
            <person name="de Haan M."/>
            <person name="Maarse A.C."/>
            <person name="Schaefer M."/>
            <person name="Mueller-Auer S."/>
            <person name="Gabel C."/>
            <person name="Fuchs M."/>
            <person name="Fartmann B."/>
            <person name="Granderath K."/>
            <person name="Dauner D."/>
            <person name="Herzl A."/>
            <person name="Neumann S."/>
            <person name="Argiriou A."/>
            <person name="Vitale D."/>
            <person name="Liguori R."/>
            <person name="Piravandi E."/>
            <person name="Massenet O."/>
            <person name="Quigley F."/>
            <person name="Clabauld G."/>
            <person name="Muendlein A."/>
            <person name="Felber R."/>
            <person name="Schnabl S."/>
            <person name="Hiller R."/>
            <person name="Schmidt W."/>
            <person name="Lecharny A."/>
            <person name="Aubourg S."/>
            <person name="Chefdor F."/>
            <person name="Cooke R."/>
            <person name="Berger C."/>
            <person name="Monfort A."/>
            <person name="Casacuberta E."/>
            <person name="Gibbons T."/>
            <person name="Weber N."/>
            <person name="Vandenbol M."/>
            <person name="Bargues M."/>
            <person name="Terol J."/>
            <person name="Torres A."/>
            <person name="Perez-Perez A."/>
            <person name="Purnelle B."/>
            <person name="Bent E."/>
            <person name="Johnson S."/>
            <person name="Tacon D."/>
            <person name="Jesse T."/>
            <person name="Heijnen L."/>
            <person name="Schwarz S."/>
            <person name="Scholler P."/>
            <person name="Heber S."/>
            <person name="Francs P."/>
            <person name="Bielke C."/>
            <person name="Frishman D."/>
            <person name="Haase D."/>
            <person name="Lemcke K."/>
            <person name="Mewes H.-W."/>
            <person name="Stocker S."/>
            <person name="Zaccaria P."/>
            <person name="Bevan M."/>
            <person name="Wilson R.K."/>
            <person name="de la Bastide M."/>
            <person name="Habermann K."/>
            <person name="Parnell L."/>
            <person name="Dedhia N."/>
            <person name="Gnoj L."/>
            <person name="Schutz K."/>
            <person name="Huang E."/>
            <person name="Spiegel L."/>
            <person name="Sekhon M."/>
            <person name="Murray J."/>
            <person name="Sheet P."/>
            <person name="Cordes M."/>
            <person name="Abu-Threideh J."/>
            <person name="Stoneking T."/>
            <person name="Kalicki J."/>
            <person name="Graves T."/>
            <person name="Harmon G."/>
            <person name="Edwards J."/>
            <person name="Latreille P."/>
            <person name="Courtney L."/>
            <person name="Cloud J."/>
            <person name="Abbott A."/>
            <person name="Scott K."/>
            <person name="Johnson D."/>
            <person name="Minx P."/>
            <person name="Bentley D."/>
            <person name="Fulton B."/>
            <person name="Miller N."/>
            <person name="Greco T."/>
            <person name="Kemp K."/>
            <person name="Kramer J."/>
            <person name="Fulton L."/>
            <person name="Mardis E."/>
            <person name="Dante M."/>
            <person name="Pepin K."/>
            <person name="Hillier L.W."/>
            <person name="Nelson J."/>
            <person name="Spieth J."/>
            <person name="Ryan E."/>
            <person name="Andrews S."/>
            <person name="Geisel C."/>
            <person name="Layman D."/>
            <person name="Du H."/>
            <person name="Ali J."/>
            <person name="Berghoff A."/>
            <person name="Jones K."/>
            <person name="Drone K."/>
            <person name="Cotton M."/>
            <person name="Joshu C."/>
            <person name="Antonoiu B."/>
            <person name="Zidanic M."/>
            <person name="Strong C."/>
            <person name="Sun H."/>
            <person name="Lamar B."/>
            <person name="Yordan C."/>
            <person name="Ma P."/>
            <person name="Zhong J."/>
            <person name="Preston R."/>
            <person name="Vil D."/>
            <person name="Shekher M."/>
            <person name="Matero A."/>
            <person name="Shah R."/>
            <person name="Swaby I.K."/>
            <person name="O'Shaughnessy A."/>
            <person name="Rodriguez M."/>
            <person name="Hoffman J."/>
            <person name="Till S."/>
            <person name="Granat S."/>
            <person name="Shohdy N."/>
            <person name="Hasegawa A."/>
            <person name="Hameed A."/>
            <person name="Lodhi M."/>
            <person name="Johnson A."/>
            <person name="Chen E."/>
            <person name="Marra M.A."/>
            <person name="Martienssen R."/>
            <person name="McCombie W.R."/>
        </authorList>
    </citation>
    <scope>NUCLEOTIDE SEQUENCE [LARGE SCALE GENOMIC DNA]</scope>
    <source>
        <strain>cv. Columbia</strain>
    </source>
</reference>
<reference key="2">
    <citation type="journal article" date="2017" name="Plant J.">
        <title>Araport11: a complete reannotation of the Arabidopsis thaliana reference genome.</title>
        <authorList>
            <person name="Cheng C.Y."/>
            <person name="Krishnakumar V."/>
            <person name="Chan A.P."/>
            <person name="Thibaud-Nissen F."/>
            <person name="Schobel S."/>
            <person name="Town C.D."/>
        </authorList>
    </citation>
    <scope>GENOME REANNOTATION</scope>
    <source>
        <strain>cv. Columbia</strain>
    </source>
</reference>
<reference key="3">
    <citation type="journal article" date="2003" name="Science">
        <title>Empirical analysis of transcriptional activity in the Arabidopsis genome.</title>
        <authorList>
            <person name="Yamada K."/>
            <person name="Lim J."/>
            <person name="Dale J.M."/>
            <person name="Chen H."/>
            <person name="Shinn P."/>
            <person name="Palm C.J."/>
            <person name="Southwick A.M."/>
            <person name="Wu H.C."/>
            <person name="Kim C.J."/>
            <person name="Nguyen M."/>
            <person name="Pham P.K."/>
            <person name="Cheuk R.F."/>
            <person name="Karlin-Newmann G."/>
            <person name="Liu S.X."/>
            <person name="Lam B."/>
            <person name="Sakano H."/>
            <person name="Wu T."/>
            <person name="Yu G."/>
            <person name="Miranda M."/>
            <person name="Quach H.L."/>
            <person name="Tripp M."/>
            <person name="Chang C.H."/>
            <person name="Lee J.M."/>
            <person name="Toriumi M.J."/>
            <person name="Chan M.M."/>
            <person name="Tang C.C."/>
            <person name="Onodera C.S."/>
            <person name="Deng J.M."/>
            <person name="Akiyama K."/>
            <person name="Ansari Y."/>
            <person name="Arakawa T."/>
            <person name="Banh J."/>
            <person name="Banno F."/>
            <person name="Bowser L."/>
            <person name="Brooks S.Y."/>
            <person name="Carninci P."/>
            <person name="Chao Q."/>
            <person name="Choy N."/>
            <person name="Enju A."/>
            <person name="Goldsmith A.D."/>
            <person name="Gurjal M."/>
            <person name="Hansen N.F."/>
            <person name="Hayashizaki Y."/>
            <person name="Johnson-Hopson C."/>
            <person name="Hsuan V.W."/>
            <person name="Iida K."/>
            <person name="Karnes M."/>
            <person name="Khan S."/>
            <person name="Koesema E."/>
            <person name="Ishida J."/>
            <person name="Jiang P.X."/>
            <person name="Jones T."/>
            <person name="Kawai J."/>
            <person name="Kamiya A."/>
            <person name="Meyers C."/>
            <person name="Nakajima M."/>
            <person name="Narusaka M."/>
            <person name="Seki M."/>
            <person name="Sakurai T."/>
            <person name="Satou M."/>
            <person name="Tamse R."/>
            <person name="Vaysberg M."/>
            <person name="Wallender E.K."/>
            <person name="Wong C."/>
            <person name="Yamamura Y."/>
            <person name="Yuan S."/>
            <person name="Shinozaki K."/>
            <person name="Davis R.W."/>
            <person name="Theologis A."/>
            <person name="Ecker J.R."/>
        </authorList>
    </citation>
    <scope>NUCLEOTIDE SEQUENCE [LARGE SCALE MRNA]</scope>
    <source>
        <strain>cv. Columbia</strain>
    </source>
</reference>
<reference key="4">
    <citation type="submission" date="2002-03" db="EMBL/GenBank/DDBJ databases">
        <title>Full-length cDNA from Arabidopsis thaliana.</title>
        <authorList>
            <person name="Brover V.V."/>
            <person name="Troukhan M.E."/>
            <person name="Alexandrov N.A."/>
            <person name="Lu Y.-P."/>
            <person name="Flavell R.B."/>
            <person name="Feldmann K.A."/>
        </authorList>
    </citation>
    <scope>NUCLEOTIDE SEQUENCE [LARGE SCALE MRNA]</scope>
</reference>
<reference key="5">
    <citation type="journal article" date="2004" name="J. Plant Physiol.">
        <title>Analysis of an Arabidopsis thaliana protein family, structurally related to cytochromes b561 and potentially involved in catecholamine biochemistry in plants.</title>
        <authorList>
            <person name="Verelst W."/>
            <person name="Asard H."/>
        </authorList>
    </citation>
    <scope>DOMAIN</scope>
    <scope>FUNCTION</scope>
</reference>
<reference key="6">
    <citation type="journal article" date="2005" name="Biochim. Biophys. Acta">
        <title>Cytochrome b561 protein family: expanding roles and versatile transmembrane electron transfer abilities as predicted by a new classification system and protein sequence motif analyses.</title>
        <authorList>
            <person name="Tsubaki M."/>
            <person name="Takeuchi F."/>
            <person name="Nakanishi N."/>
        </authorList>
    </citation>
    <scope>GENE FAMILY</scope>
    <scope>NOMENCLATURE</scope>
</reference>
<reference key="7">
    <citation type="journal article" date="2009" name="Plant Physiol.">
        <title>Auxin-responsive genes AIR12 code for a new family of plasma membrane b-type cytochromes specific to flowering plants.</title>
        <authorList>
            <person name="Preger V."/>
            <person name="Tango N."/>
            <person name="Marchand C."/>
            <person name="Lemaire S.D."/>
            <person name="Carbonera D."/>
            <person name="Di Valentin M."/>
            <person name="Costa A."/>
            <person name="Pupillo P."/>
            <person name="Trost P."/>
        </authorList>
    </citation>
    <scope>DOMAIN</scope>
</reference>
<reference key="8">
    <citation type="journal article" date="2013" name="Antioxid. Redox Signal.">
        <title>Cytochromes b561: ascorbate-mediated trans-membrane electron transport.</title>
        <authorList>
            <person name="Asard H."/>
            <person name="Barbaro R."/>
            <person name="Trost P."/>
            <person name="Berczi A."/>
        </authorList>
    </citation>
    <scope>REVIEW</scope>
</reference>
<name>B561O_ARATH</name>
<proteinExistence type="evidence at transcript level"/>